<protein>
    <recommendedName>
        <fullName>Anthrax toxin expression trans-acting positive regulator</fullName>
    </recommendedName>
</protein>
<geneLocation type="plasmid">
    <name>pXO1</name>
</geneLocation>
<proteinExistence type="evidence at protein level"/>
<sequence length="475" mass="55562">MLTPISIEKEHIRLINLLHFINEQNRWFTIKELSDYLQVADKTVRKYLKLLEDEIPPSWNLLVQKGKGIYLKKPLNESLSFVESKILRKSLNLQICEELVFKKNSMQSLAQKLHLQVGALYPIINQINYDIQSSHLNIKKKPLEISGREQDVRVFMLRLYCNIPNDYWPFPYINKQNITDLINKMEKILNVQMYTYSKHKLCVLFAITISRLLSGNTIDNVSGLILVNKNDDHYKTVASITSELQNSFGVTLHETEISFLALALLLSLGNSITTDSNKTLTSYKKTIMPLAKEITKGIEHKLQLGINYDESFLTYVVLIIKKALDKNFIQYYNYNIKFIRHIKQRHPNTFNTIQECISNLNYTVYSHFDCYEISLLTMHFETQRMLFKNNPKKIYVYTSQGCIHREYISALLEKRYNGLIKIVRNTIINLTNESLQDMEIDIIISNVNLPIKNIPIVQISEFPTERDFHEIKKII</sequence>
<keyword id="KW-0002">3D-structure</keyword>
<keyword id="KW-0010">Activator</keyword>
<keyword id="KW-0972">Capsule biogenesis/degradation</keyword>
<keyword id="KW-0614">Plasmid</keyword>
<keyword id="KW-1185">Reference proteome</keyword>
<keyword id="KW-0677">Repeat</keyword>
<keyword id="KW-0804">Transcription</keyword>
<keyword id="KW-0805">Transcription regulation</keyword>
<keyword id="KW-0843">Virulence</keyword>
<name>ATXA_BACAN</name>
<dbReference type="EMBL" id="L13841">
    <property type="protein sequence ID" value="AAA71986.1"/>
    <property type="molecule type" value="Unassigned_DNA"/>
</dbReference>
<dbReference type="EMBL" id="AF065404">
    <property type="protein sequence ID" value="AAD32423.1"/>
    <property type="molecule type" value="Genomic_DNA"/>
</dbReference>
<dbReference type="EMBL" id="AE011190">
    <property type="protein sequence ID" value="AAM26091.1"/>
    <property type="molecule type" value="Genomic_DNA"/>
</dbReference>
<dbReference type="EMBL" id="AE017336">
    <property type="protein sequence ID" value="AAT28886.2"/>
    <property type="molecule type" value="Genomic_DNA"/>
</dbReference>
<dbReference type="EMBL" id="AJ413928">
    <property type="protein sequence ID" value="CAC93922.1"/>
    <property type="molecule type" value="Genomic_DNA"/>
</dbReference>
<dbReference type="EMBL" id="AJ413929">
    <property type="protein sequence ID" value="CAC93923.1"/>
    <property type="molecule type" value="Genomic_DNA"/>
</dbReference>
<dbReference type="PIR" id="A48664">
    <property type="entry name" value="A48664"/>
</dbReference>
<dbReference type="PIR" id="G59105">
    <property type="entry name" value="G59105"/>
</dbReference>
<dbReference type="RefSeq" id="NP_052815.1">
    <property type="nucleotide sequence ID" value="NC_001496.1"/>
</dbReference>
<dbReference type="RefSeq" id="WP_000957312.1">
    <property type="nucleotide sequence ID" value="NZ_VTZH01000015.1"/>
</dbReference>
<dbReference type="PDB" id="4R6I">
    <property type="method" value="X-ray"/>
    <property type="resolution" value="2.65 A"/>
    <property type="chains" value="A/B=1-475"/>
</dbReference>
<dbReference type="PDBsum" id="4R6I"/>
<dbReference type="SMR" id="Q44636"/>
<dbReference type="GeneID" id="45025503"/>
<dbReference type="KEGG" id="banh:HYU01_28705"/>
<dbReference type="KEGG" id="bar:GBAA_pXO1_0146"/>
<dbReference type="HOGENOM" id="CLU_569549_0_0_9"/>
<dbReference type="OMA" id="RITHIIQ"/>
<dbReference type="EvolutionaryTrace" id="Q44636"/>
<dbReference type="PHI-base" id="PHI:11906"/>
<dbReference type="PHI-base" id="PHI:4087"/>
<dbReference type="Proteomes" id="UP000000594">
    <property type="component" value="Plasmid pXO1"/>
</dbReference>
<dbReference type="GO" id="GO:0006355">
    <property type="term" value="P:regulation of DNA-templated transcription"/>
    <property type="evidence" value="ECO:0007669"/>
    <property type="project" value="InterPro"/>
</dbReference>
<dbReference type="Gene3D" id="3.40.50.2300">
    <property type="match status" value="1"/>
</dbReference>
<dbReference type="Gene3D" id="1.10.1790.10">
    <property type="entry name" value="PRD domain"/>
    <property type="match status" value="2"/>
</dbReference>
<dbReference type="Gene3D" id="1.10.10.10">
    <property type="entry name" value="Winged helix-like DNA-binding domain superfamily/Winged helix DNA-binding domain"/>
    <property type="match status" value="1"/>
</dbReference>
<dbReference type="InterPro" id="IPR050661">
    <property type="entry name" value="BglG_antiterminators"/>
</dbReference>
<dbReference type="InterPro" id="IPR007737">
    <property type="entry name" value="Mga_HTH"/>
</dbReference>
<dbReference type="InterPro" id="IPR011608">
    <property type="entry name" value="PRD"/>
</dbReference>
<dbReference type="InterPro" id="IPR036634">
    <property type="entry name" value="PRD_sf"/>
</dbReference>
<dbReference type="InterPro" id="IPR036388">
    <property type="entry name" value="WH-like_DNA-bd_sf"/>
</dbReference>
<dbReference type="PANTHER" id="PTHR30185">
    <property type="entry name" value="CRYPTIC BETA-GLUCOSIDE BGL OPERON ANTITERMINATOR"/>
    <property type="match status" value="1"/>
</dbReference>
<dbReference type="PANTHER" id="PTHR30185:SF18">
    <property type="entry name" value="TRANSCRIPTIONAL REGULATOR MTLR"/>
    <property type="match status" value="1"/>
</dbReference>
<dbReference type="Pfam" id="PF05043">
    <property type="entry name" value="Mga"/>
    <property type="match status" value="1"/>
</dbReference>
<dbReference type="Pfam" id="PF00874">
    <property type="entry name" value="PRD"/>
    <property type="match status" value="2"/>
</dbReference>
<dbReference type="SUPFAM" id="SSF63520">
    <property type="entry name" value="PTS-regulatory domain, PRD"/>
    <property type="match status" value="1"/>
</dbReference>
<dbReference type="PROSITE" id="PS51372">
    <property type="entry name" value="PRD_2"/>
    <property type="match status" value="2"/>
</dbReference>
<feature type="chain" id="PRO_0000219545" description="Anthrax toxin expression trans-acting positive regulator">
    <location>
        <begin position="1"/>
        <end position="475"/>
    </location>
</feature>
<feature type="domain" description="PRD 1" evidence="1">
    <location>
        <begin position="169"/>
        <end position="274"/>
    </location>
</feature>
<feature type="domain" description="PRD 2" evidence="1">
    <location>
        <begin position="282"/>
        <end position="390"/>
    </location>
</feature>
<feature type="sequence variant" description="In strain: UM23-1.">
    <original>L</original>
    <variation>LL</variation>
    <location>
        <position position="75"/>
    </location>
</feature>
<feature type="sequence variant" description="In strain: UM23-1.">
    <original>F</original>
    <variation>Y</variation>
    <location>
        <position position="387"/>
    </location>
</feature>
<feature type="helix" evidence="3">
    <location>
        <begin position="7"/>
        <end position="9"/>
    </location>
</feature>
<feature type="helix" evidence="3">
    <location>
        <begin position="10"/>
        <end position="23"/>
    </location>
</feature>
<feature type="helix" evidence="3">
    <location>
        <begin position="30"/>
        <end position="37"/>
    </location>
</feature>
<feature type="helix" evidence="3">
    <location>
        <begin position="41"/>
        <end position="54"/>
    </location>
</feature>
<feature type="strand" evidence="3">
    <location>
        <begin position="59"/>
        <end position="62"/>
    </location>
</feature>
<feature type="strand" evidence="3">
    <location>
        <begin position="69"/>
        <end position="72"/>
    </location>
</feature>
<feature type="helix" evidence="3">
    <location>
        <begin position="80"/>
        <end position="89"/>
    </location>
</feature>
<feature type="helix" evidence="3">
    <location>
        <begin position="91"/>
        <end position="101"/>
    </location>
</feature>
<feature type="helix" evidence="3">
    <location>
        <begin position="106"/>
        <end position="112"/>
    </location>
</feature>
<feature type="helix" evidence="3">
    <location>
        <begin position="117"/>
        <end position="130"/>
    </location>
</feature>
<feature type="helix" evidence="3">
    <location>
        <begin position="131"/>
        <end position="134"/>
    </location>
</feature>
<feature type="strand" evidence="3">
    <location>
        <begin position="137"/>
        <end position="139"/>
    </location>
</feature>
<feature type="turn" evidence="3">
    <location>
        <begin position="140"/>
        <end position="143"/>
    </location>
</feature>
<feature type="strand" evidence="3">
    <location>
        <begin position="144"/>
        <end position="147"/>
    </location>
</feature>
<feature type="helix" evidence="3">
    <location>
        <begin position="149"/>
        <end position="159"/>
    </location>
</feature>
<feature type="turn" evidence="3">
    <location>
        <begin position="160"/>
        <end position="162"/>
    </location>
</feature>
<feature type="helix" evidence="3">
    <location>
        <begin position="175"/>
        <end position="189"/>
    </location>
</feature>
<feature type="helix" evidence="3">
    <location>
        <begin position="195"/>
        <end position="213"/>
    </location>
</feature>
<feature type="strand" evidence="3">
    <location>
        <begin position="223"/>
        <end position="225"/>
    </location>
</feature>
<feature type="helix" evidence="3">
    <location>
        <begin position="232"/>
        <end position="248"/>
    </location>
</feature>
<feature type="helix" evidence="3">
    <location>
        <begin position="254"/>
        <end position="267"/>
    </location>
</feature>
<feature type="strand" evidence="3">
    <location>
        <begin position="269"/>
        <end position="271"/>
    </location>
</feature>
<feature type="helix" evidence="3">
    <location>
        <begin position="277"/>
        <end position="302"/>
    </location>
</feature>
<feature type="helix" evidence="3">
    <location>
        <begin position="310"/>
        <end position="325"/>
    </location>
</feature>
<feature type="strand" evidence="3">
    <location>
        <begin position="328"/>
        <end position="331"/>
    </location>
</feature>
<feature type="helix" evidence="3">
    <location>
        <begin position="336"/>
        <end position="345"/>
    </location>
</feature>
<feature type="helix" evidence="3">
    <location>
        <begin position="347"/>
        <end position="358"/>
    </location>
</feature>
<feature type="helix" evidence="3">
    <location>
        <begin position="362"/>
        <end position="365"/>
    </location>
</feature>
<feature type="helix" evidence="3">
    <location>
        <begin position="370"/>
        <end position="389"/>
    </location>
</feature>
<feature type="strand" evidence="3">
    <location>
        <begin position="392"/>
        <end position="397"/>
    </location>
</feature>
<feature type="helix" evidence="3">
    <location>
        <begin position="402"/>
        <end position="416"/>
    </location>
</feature>
<feature type="helix" evidence="3">
    <location>
        <begin position="417"/>
        <end position="419"/>
    </location>
</feature>
<feature type="strand" evidence="3">
    <location>
        <begin position="420"/>
        <end position="422"/>
    </location>
</feature>
<feature type="helix" evidence="3">
    <location>
        <begin position="432"/>
        <end position="436"/>
    </location>
</feature>
<feature type="turn" evidence="3">
    <location>
        <begin position="437"/>
        <end position="439"/>
    </location>
</feature>
<feature type="strand" evidence="3">
    <location>
        <begin position="442"/>
        <end position="447"/>
    </location>
</feature>
<feature type="strand" evidence="3">
    <location>
        <begin position="456"/>
        <end position="458"/>
    </location>
</feature>
<feature type="helix" evidence="3">
    <location>
        <begin position="465"/>
        <end position="474"/>
    </location>
</feature>
<comment type="function">
    <text>Acts in trans to stimulate anthrax toxins expression. It activates the transcription of the pagA, cya and lef genes. It also activates capB, a gene required for capsule production.</text>
</comment>
<comment type="induction">
    <text>By carbonic acid and CO(2).</text>
</comment>
<comment type="similarity">
    <text evidence="2">Belongs to the AtxA/AcpA family.</text>
</comment>
<evidence type="ECO:0000255" key="1">
    <source>
        <dbReference type="PROSITE-ProRule" id="PRU00704"/>
    </source>
</evidence>
<evidence type="ECO:0000305" key="2"/>
<evidence type="ECO:0007829" key="3">
    <source>
        <dbReference type="PDB" id="4R6I"/>
    </source>
</evidence>
<gene>
    <name type="primary">atxA</name>
    <name type="ordered locus">pXO1-119</name>
    <name type="ordered locus">BXA0146</name>
    <name type="ordered locus">GBAA_pXO1_0146</name>
</gene>
<organism>
    <name type="scientific">Bacillus anthracis</name>
    <dbReference type="NCBI Taxonomy" id="1392"/>
    <lineage>
        <taxon>Bacteria</taxon>
        <taxon>Bacillati</taxon>
        <taxon>Bacillota</taxon>
        <taxon>Bacilli</taxon>
        <taxon>Bacillales</taxon>
        <taxon>Bacillaceae</taxon>
        <taxon>Bacillus</taxon>
        <taxon>Bacillus cereus group</taxon>
    </lineage>
</organism>
<reference key="1">
    <citation type="journal article" date="1993" name="J. Bacteriol.">
        <title>Cloning and characterization of a gene whose product is a trans-activator of anthrax toxin synthesis.</title>
        <authorList>
            <person name="Uchida I."/>
            <person name="Hornung J.M."/>
            <person name="Thorne C.B."/>
            <person name="Klimpel K.R."/>
            <person name="Leppla S.H."/>
        </authorList>
    </citation>
    <scope>NUCLEOTIDE SEQUENCE [GENOMIC DNA]</scope>
    <scope>CHARACTERIZATION</scope>
    <source>
        <strain>UM23-1</strain>
    </source>
</reference>
<reference key="2">
    <citation type="journal article" date="1999" name="J. Bacteriol.">
        <title>Sequence and organization of pXO1, the large Bacillus anthracis plasmid harboring the anthrax toxin genes.</title>
        <authorList>
            <person name="Okinaka R.T."/>
            <person name="Cloud K."/>
            <person name="Hampton O."/>
            <person name="Hoffmaster A.R."/>
            <person name="Hill K.K."/>
            <person name="Keim P."/>
            <person name="Koehler T.M."/>
            <person name="Lamke G."/>
            <person name="Kumano S."/>
            <person name="Mahillon J."/>
            <person name="Manter D."/>
            <person name="Martinez Y."/>
            <person name="Ricke D."/>
            <person name="Svensson R."/>
            <person name="Jackson P.J."/>
        </authorList>
    </citation>
    <scope>NUCLEOTIDE SEQUENCE [LARGE SCALE GENOMIC DNA]</scope>
    <source>
        <strain>Sterne</strain>
    </source>
</reference>
<reference key="3">
    <citation type="journal article" date="2002" name="Science">
        <title>Comparative genome sequencing for discovery of novel polymorphisms in Bacillus anthracis.</title>
        <authorList>
            <person name="Read T.D."/>
            <person name="Salzberg S.L."/>
            <person name="Pop M."/>
            <person name="Shumway M.F."/>
            <person name="Umayam L."/>
            <person name="Jiang L."/>
            <person name="Holtzapple E."/>
            <person name="Busch J.D."/>
            <person name="Smith K.L."/>
            <person name="Schupp J.M."/>
            <person name="Solomon D."/>
            <person name="Keim P."/>
            <person name="Fraser C.M."/>
        </authorList>
    </citation>
    <scope>NUCLEOTIDE SEQUENCE [GENOMIC DNA]</scope>
    <source>
        <strain>Ames / isolate Florida / A2012</strain>
    </source>
</reference>
<reference key="4">
    <citation type="journal article" date="2009" name="J. Bacteriol.">
        <title>The complete genome sequence of Bacillus anthracis Ames 'Ancestor'.</title>
        <authorList>
            <person name="Ravel J."/>
            <person name="Jiang L."/>
            <person name="Stanley S.T."/>
            <person name="Wilson M.R."/>
            <person name="Decker R.S."/>
            <person name="Read T.D."/>
            <person name="Worsham P."/>
            <person name="Keim P.S."/>
            <person name="Salzberg S.L."/>
            <person name="Fraser-Liggett C.M."/>
            <person name="Rasko D.A."/>
        </authorList>
    </citation>
    <scope>NUCLEOTIDE SEQUENCE [LARGE SCALE GENOMIC DNA]</scope>
    <source>
        <strain>Ames ancestor</strain>
    </source>
</reference>
<reference key="5">
    <citation type="journal article" date="2002" name="J. Appl. Microbiol.">
        <title>Sequence analysis of the genes encoding for the major virulence factors of Bacillus anthracis vaccine strain 'Carbosap'.</title>
        <authorList>
            <person name="Adone R."/>
            <person name="Pasquali P."/>
            <person name="La Rosa G."/>
            <person name="Marianelli C."/>
            <person name="Muscillo M."/>
            <person name="Fasanella A."/>
            <person name="Francia M."/>
            <person name="Ciuchini F."/>
        </authorList>
    </citation>
    <scope>NUCLEOTIDE SEQUENCE [GENOMIC DNA] OF 8-475</scope>
    <source>
        <strain>Carbosap</strain>
        <strain>Ferrara</strain>
    </source>
</reference>
<reference key="6">
    <citation type="journal article" date="1997" name="Infect. Immun.">
        <title>The anthrax toxin activator gene atxA is associated with CO2-enhanced non-toxin gene expression in Bacillus anthracis.</title>
        <authorList>
            <person name="Hoffmaster A.R."/>
            <person name="Koehler T.M."/>
        </authorList>
    </citation>
    <scope>CHARACTERIZATION</scope>
</reference>
<accession>Q44636</accession>
<accession>Q84J36</accession>
<accession>Q933U4</accession>
<accession>Q933V7</accession>
<accession>Q9RQT9</accession>